<reference key="1">
    <citation type="submission" date="2006-03" db="EMBL/GenBank/DDBJ databases">
        <title>Complete genome sequence of Francisella tularensis LVS (Live Vaccine Strain).</title>
        <authorList>
            <person name="Chain P."/>
            <person name="Larimer F."/>
            <person name="Land M."/>
            <person name="Stilwagen S."/>
            <person name="Larsson P."/>
            <person name="Bearden S."/>
            <person name="Chu M."/>
            <person name="Oyston P."/>
            <person name="Forsman M."/>
            <person name="Andersson S."/>
            <person name="Lindler L."/>
            <person name="Titball R."/>
            <person name="Garcia E."/>
        </authorList>
    </citation>
    <scope>NUCLEOTIDE SEQUENCE [LARGE SCALE GENOMIC DNA]</scope>
    <source>
        <strain>LVS</strain>
    </source>
</reference>
<accession>Q2A5W5</accession>
<protein>
    <recommendedName>
        <fullName evidence="1">Na(+)/H(+) antiporter NhaA</fullName>
    </recommendedName>
    <alternativeName>
        <fullName evidence="1">Sodium/proton antiporter NhaA</fullName>
    </alternativeName>
</protein>
<keyword id="KW-0050">Antiport</keyword>
<keyword id="KW-0997">Cell inner membrane</keyword>
<keyword id="KW-1003">Cell membrane</keyword>
<keyword id="KW-0406">Ion transport</keyword>
<keyword id="KW-0472">Membrane</keyword>
<keyword id="KW-1185">Reference proteome</keyword>
<keyword id="KW-0915">Sodium</keyword>
<keyword id="KW-0739">Sodium transport</keyword>
<keyword id="KW-0812">Transmembrane</keyword>
<keyword id="KW-1133">Transmembrane helix</keyword>
<keyword id="KW-0813">Transport</keyword>
<evidence type="ECO:0000255" key="1">
    <source>
        <dbReference type="HAMAP-Rule" id="MF_01844"/>
    </source>
</evidence>
<sequence length="383" mass="41758">MGASQKNQELIGGLILFSAALLAIVVNNSPLASYYAMLETINVKLGIENLVIDKNLMHWINDGLMAIYFLYIGLEIKREIIVGTLSKLSNIITPAIAAFAGLAMPSLIYLSINHDIKVINGWAIPSATDIAFTLGILALLGTRVPAKLKLLVITIAIFDDIAAIAIIAIFYTKSLSLLSLSLGTLFILAMIICNRIFKINRSSVYVVLGFFAWFCTIKSGVHATLAGFTTALCIPFRENDKDSPANFMEDSLHPWIIYFILPVFAFANAGISFSGISFSILFEPITLGIIWGLFVGKQLGIFSILAVFKKLKWFKLGESFSNLQLYGISLLCGIGFTMSLFIGVLAFNDTHLLNAIKIGVVVGSVLSGFFGYIVLRFIVTNPS</sequence>
<comment type="function">
    <text evidence="1">Na(+)/H(+) antiporter that extrudes sodium in exchange for external protons.</text>
</comment>
<comment type="catalytic activity">
    <reaction evidence="1">
        <text>Na(+)(in) + 2 H(+)(out) = Na(+)(out) + 2 H(+)(in)</text>
        <dbReference type="Rhea" id="RHEA:29251"/>
        <dbReference type="ChEBI" id="CHEBI:15378"/>
        <dbReference type="ChEBI" id="CHEBI:29101"/>
    </reaction>
    <physiologicalReaction direction="left-to-right" evidence="1">
        <dbReference type="Rhea" id="RHEA:29252"/>
    </physiologicalReaction>
</comment>
<comment type="subcellular location">
    <subcellularLocation>
        <location evidence="1">Cell inner membrane</location>
        <topology evidence="1">Multi-pass membrane protein</topology>
    </subcellularLocation>
</comment>
<comment type="similarity">
    <text evidence="1">Belongs to the NhaA Na(+)/H(+) (TC 2.A.33) antiporter family.</text>
</comment>
<gene>
    <name evidence="1" type="primary">nhaA</name>
    <name type="ordered locus">FTL_0085</name>
</gene>
<feature type="chain" id="PRO_0000334295" description="Na(+)/H(+) antiporter NhaA">
    <location>
        <begin position="1"/>
        <end position="383"/>
    </location>
</feature>
<feature type="transmembrane region" description="Helical" evidence="1">
    <location>
        <begin position="10"/>
        <end position="30"/>
    </location>
</feature>
<feature type="transmembrane region" description="Helical" evidence="1">
    <location>
        <begin position="56"/>
        <end position="76"/>
    </location>
</feature>
<feature type="transmembrane region" description="Helical" evidence="1">
    <location>
        <begin position="91"/>
        <end position="111"/>
    </location>
</feature>
<feature type="transmembrane region" description="Helical" evidence="1">
    <location>
        <begin position="121"/>
        <end position="141"/>
    </location>
</feature>
<feature type="transmembrane region" description="Helical" evidence="1">
    <location>
        <begin position="150"/>
        <end position="170"/>
    </location>
</feature>
<feature type="transmembrane region" description="Helical" evidence="1">
    <location>
        <begin position="174"/>
        <end position="194"/>
    </location>
</feature>
<feature type="transmembrane region" description="Helical" evidence="1">
    <location>
        <begin position="206"/>
        <end position="226"/>
    </location>
</feature>
<feature type="transmembrane region" description="Helical" evidence="1">
    <location>
        <begin position="254"/>
        <end position="274"/>
    </location>
</feature>
<feature type="transmembrane region" description="Helical" evidence="1">
    <location>
        <begin position="289"/>
        <end position="308"/>
    </location>
</feature>
<feature type="transmembrane region" description="Helical" evidence="1">
    <location>
        <begin position="327"/>
        <end position="347"/>
    </location>
</feature>
<feature type="transmembrane region" description="Helical" evidence="1">
    <location>
        <begin position="355"/>
        <end position="375"/>
    </location>
</feature>
<dbReference type="EMBL" id="AM233362">
    <property type="protein sequence ID" value="CAJ78526.1"/>
    <property type="molecule type" value="Genomic_DNA"/>
</dbReference>
<dbReference type="RefSeq" id="WP_003014054.1">
    <property type="nucleotide sequence ID" value="NZ_CP009694.1"/>
</dbReference>
<dbReference type="SMR" id="Q2A5W5"/>
<dbReference type="KEGG" id="ftl:FTL_0085"/>
<dbReference type="Proteomes" id="UP000001944">
    <property type="component" value="Chromosome"/>
</dbReference>
<dbReference type="GO" id="GO:0005886">
    <property type="term" value="C:plasma membrane"/>
    <property type="evidence" value="ECO:0007669"/>
    <property type="project" value="UniProtKB-SubCell"/>
</dbReference>
<dbReference type="GO" id="GO:0015385">
    <property type="term" value="F:sodium:proton antiporter activity"/>
    <property type="evidence" value="ECO:0007669"/>
    <property type="project" value="TreeGrafter"/>
</dbReference>
<dbReference type="GO" id="GO:0006885">
    <property type="term" value="P:regulation of pH"/>
    <property type="evidence" value="ECO:0007669"/>
    <property type="project" value="InterPro"/>
</dbReference>
<dbReference type="Gene3D" id="1.20.1530.10">
    <property type="entry name" value="Na+/H+ antiporter like domain"/>
    <property type="match status" value="1"/>
</dbReference>
<dbReference type="HAMAP" id="MF_01844">
    <property type="entry name" value="NhaA"/>
    <property type="match status" value="1"/>
</dbReference>
<dbReference type="InterPro" id="IPR023171">
    <property type="entry name" value="Na/H_antiporter_dom_sf"/>
</dbReference>
<dbReference type="InterPro" id="IPR004670">
    <property type="entry name" value="NhaA"/>
</dbReference>
<dbReference type="NCBIfam" id="TIGR00773">
    <property type="entry name" value="NhaA"/>
    <property type="match status" value="1"/>
</dbReference>
<dbReference type="NCBIfam" id="NF007111">
    <property type="entry name" value="PRK09560.1"/>
    <property type="match status" value="1"/>
</dbReference>
<dbReference type="NCBIfam" id="NF007112">
    <property type="entry name" value="PRK09561.1"/>
    <property type="match status" value="1"/>
</dbReference>
<dbReference type="NCBIfam" id="NF011427">
    <property type="entry name" value="PRK14854.1"/>
    <property type="match status" value="1"/>
</dbReference>
<dbReference type="PANTHER" id="PTHR30341:SF0">
    <property type="entry name" value="NA(+)_H(+) ANTIPORTER NHAA"/>
    <property type="match status" value="1"/>
</dbReference>
<dbReference type="PANTHER" id="PTHR30341">
    <property type="entry name" value="SODIUM ION/PROTON ANTIPORTER NHAA-RELATED"/>
    <property type="match status" value="1"/>
</dbReference>
<dbReference type="Pfam" id="PF06965">
    <property type="entry name" value="Na_H_antiport_1"/>
    <property type="match status" value="1"/>
</dbReference>
<name>NHAA_FRATH</name>
<organism>
    <name type="scientific">Francisella tularensis subsp. holarctica (strain LVS)</name>
    <dbReference type="NCBI Taxonomy" id="376619"/>
    <lineage>
        <taxon>Bacteria</taxon>
        <taxon>Pseudomonadati</taxon>
        <taxon>Pseudomonadota</taxon>
        <taxon>Gammaproteobacteria</taxon>
        <taxon>Thiotrichales</taxon>
        <taxon>Francisellaceae</taxon>
        <taxon>Francisella</taxon>
    </lineage>
</organism>
<proteinExistence type="inferred from homology"/>